<comment type="function">
    <text evidence="1">Mitochondrial intermembrane chaperone that participates in the import and insertion of multi-pass transmembrane proteins into the mitochondrial inner membrane. Also required for the transfer of beta-barrel precursors from the TOM complex to the sorting and assembly machinery (SAM complex) of the outer membrane. Acts as a chaperone-like protein that protects the hydrophobic precursors from aggregation and guide them through the mitochondrial intermembrane space (By similarity).</text>
</comment>
<comment type="subunit">
    <text evidence="1">Heterohexamer; composed of 3 copies of TIM9 and 3 copies of TIM10, named soluble 70 kDa complex. Associates with the TIM22 complex, whose core is composed of TIM22 and TIM54. Interacts with the transmembrane regions of multi-pass transmembrane proteins in transit (By similarity).</text>
</comment>
<comment type="subcellular location">
    <subcellularLocation>
        <location evidence="1">Mitochondrion inner membrane</location>
        <topology evidence="1">Peripheral membrane protein</topology>
        <orientation evidence="1">Intermembrane side</orientation>
    </subcellularLocation>
</comment>
<comment type="domain">
    <text evidence="1">The twin CX3C motif contains 4 conserved Cys residues that form 2 disulfide bonds in the mitochondrial intermembrane space. However, during the transit of TIM9 from cytoplasm into mitochondrion, the Cys residues probably coordinate zinc, thereby preventing folding and allowing its transfer across mitochondrial outer membrane (By similarity).</text>
</comment>
<comment type="similarity">
    <text evidence="2">Belongs to the small Tim family.</text>
</comment>
<accession>Q6BU42</accession>
<gene>
    <name type="primary">TIM9</name>
    <name type="ordered locus">DEHA2C13772g</name>
</gene>
<feature type="chain" id="PRO_0000228044" description="Mitochondrial import inner membrane translocase subunit TIM9">
    <location>
        <begin position="1"/>
        <end position="88"/>
    </location>
</feature>
<feature type="short sequence motif" description="Twin CX3C motif">
    <location>
        <begin position="35"/>
        <end position="59"/>
    </location>
</feature>
<feature type="disulfide bond" evidence="1">
    <location>
        <begin position="35"/>
        <end position="59"/>
    </location>
</feature>
<feature type="disulfide bond" evidence="1">
    <location>
        <begin position="39"/>
        <end position="55"/>
    </location>
</feature>
<evidence type="ECO:0000250" key="1"/>
<evidence type="ECO:0000305" key="2"/>
<sequence length="88" mass="10490">MDQLNVKEQQDFQQIVEQKQMKDFMRLYSNLVSKCFDDCVNDFTSNNLTTKETGCITKCSEKFLKHSERVGQRFQEQNALLMQNMQKR</sequence>
<proteinExistence type="inferred from homology"/>
<name>TIM9_DEBHA</name>
<keyword id="KW-0143">Chaperone</keyword>
<keyword id="KW-1015">Disulfide bond</keyword>
<keyword id="KW-0472">Membrane</keyword>
<keyword id="KW-0479">Metal-binding</keyword>
<keyword id="KW-0496">Mitochondrion</keyword>
<keyword id="KW-0999">Mitochondrion inner membrane</keyword>
<keyword id="KW-0653">Protein transport</keyword>
<keyword id="KW-1185">Reference proteome</keyword>
<keyword id="KW-0811">Translocation</keyword>
<keyword id="KW-0813">Transport</keyword>
<keyword id="KW-0862">Zinc</keyword>
<reference key="1">
    <citation type="journal article" date="2004" name="Nature">
        <title>Genome evolution in yeasts.</title>
        <authorList>
            <person name="Dujon B."/>
            <person name="Sherman D."/>
            <person name="Fischer G."/>
            <person name="Durrens P."/>
            <person name="Casaregola S."/>
            <person name="Lafontaine I."/>
            <person name="de Montigny J."/>
            <person name="Marck C."/>
            <person name="Neuveglise C."/>
            <person name="Talla E."/>
            <person name="Goffard N."/>
            <person name="Frangeul L."/>
            <person name="Aigle M."/>
            <person name="Anthouard V."/>
            <person name="Babour A."/>
            <person name="Barbe V."/>
            <person name="Barnay S."/>
            <person name="Blanchin S."/>
            <person name="Beckerich J.-M."/>
            <person name="Beyne E."/>
            <person name="Bleykasten C."/>
            <person name="Boisrame A."/>
            <person name="Boyer J."/>
            <person name="Cattolico L."/>
            <person name="Confanioleri F."/>
            <person name="de Daruvar A."/>
            <person name="Despons L."/>
            <person name="Fabre E."/>
            <person name="Fairhead C."/>
            <person name="Ferry-Dumazet H."/>
            <person name="Groppi A."/>
            <person name="Hantraye F."/>
            <person name="Hennequin C."/>
            <person name="Jauniaux N."/>
            <person name="Joyet P."/>
            <person name="Kachouri R."/>
            <person name="Kerrest A."/>
            <person name="Koszul R."/>
            <person name="Lemaire M."/>
            <person name="Lesur I."/>
            <person name="Ma L."/>
            <person name="Muller H."/>
            <person name="Nicaud J.-M."/>
            <person name="Nikolski M."/>
            <person name="Oztas S."/>
            <person name="Ozier-Kalogeropoulos O."/>
            <person name="Pellenz S."/>
            <person name="Potier S."/>
            <person name="Richard G.-F."/>
            <person name="Straub M.-L."/>
            <person name="Suleau A."/>
            <person name="Swennen D."/>
            <person name="Tekaia F."/>
            <person name="Wesolowski-Louvel M."/>
            <person name="Westhof E."/>
            <person name="Wirth B."/>
            <person name="Zeniou-Meyer M."/>
            <person name="Zivanovic Y."/>
            <person name="Bolotin-Fukuhara M."/>
            <person name="Thierry A."/>
            <person name="Bouchier C."/>
            <person name="Caudron B."/>
            <person name="Scarpelli C."/>
            <person name="Gaillardin C."/>
            <person name="Weissenbach J."/>
            <person name="Wincker P."/>
            <person name="Souciet J.-L."/>
        </authorList>
    </citation>
    <scope>NUCLEOTIDE SEQUENCE [LARGE SCALE GENOMIC DNA]</scope>
    <source>
        <strain>ATCC 36239 / CBS 767 / BCRC 21394 / JCM 1990 / NBRC 0083 / IGC 2968</strain>
    </source>
</reference>
<dbReference type="EMBL" id="CR382135">
    <property type="protein sequence ID" value="CAG86355.2"/>
    <property type="molecule type" value="Genomic_DNA"/>
</dbReference>
<dbReference type="RefSeq" id="XP_458277.2">
    <property type="nucleotide sequence ID" value="XM_458277.2"/>
</dbReference>
<dbReference type="SMR" id="Q6BU42"/>
<dbReference type="FunCoup" id="Q6BU42">
    <property type="interactions" value="951"/>
</dbReference>
<dbReference type="STRING" id="284592.Q6BU42"/>
<dbReference type="GeneID" id="2900053"/>
<dbReference type="KEGG" id="dha:DEHA2C13772g"/>
<dbReference type="VEuPathDB" id="FungiDB:DEHA2C13772g"/>
<dbReference type="eggNOG" id="KOG3479">
    <property type="taxonomic scope" value="Eukaryota"/>
</dbReference>
<dbReference type="HOGENOM" id="CLU_141397_3_0_1"/>
<dbReference type="InParanoid" id="Q6BU42"/>
<dbReference type="OMA" id="QDFLRMY"/>
<dbReference type="OrthoDB" id="1551503at2759"/>
<dbReference type="Proteomes" id="UP000000599">
    <property type="component" value="Chromosome C"/>
</dbReference>
<dbReference type="GO" id="GO:0042719">
    <property type="term" value="C:mitochondrial intermembrane space protein transporter complex"/>
    <property type="evidence" value="ECO:0007669"/>
    <property type="project" value="EnsemblFungi"/>
</dbReference>
<dbReference type="GO" id="GO:0042721">
    <property type="term" value="C:TIM22 mitochondrial import inner membrane insertion complex"/>
    <property type="evidence" value="ECO:0007669"/>
    <property type="project" value="EnsemblFungi"/>
</dbReference>
<dbReference type="GO" id="GO:0046872">
    <property type="term" value="F:metal ion binding"/>
    <property type="evidence" value="ECO:0007669"/>
    <property type="project" value="UniProtKB-KW"/>
</dbReference>
<dbReference type="GO" id="GO:0140318">
    <property type="term" value="F:protein transporter activity"/>
    <property type="evidence" value="ECO:0007669"/>
    <property type="project" value="EnsemblFungi"/>
</dbReference>
<dbReference type="GO" id="GO:0051082">
    <property type="term" value="F:unfolded protein binding"/>
    <property type="evidence" value="ECO:0007669"/>
    <property type="project" value="EnsemblFungi"/>
</dbReference>
<dbReference type="GO" id="GO:0045039">
    <property type="term" value="P:protein insertion into mitochondrial inner membrane"/>
    <property type="evidence" value="ECO:0007669"/>
    <property type="project" value="EnsemblFungi"/>
</dbReference>
<dbReference type="FunFam" id="1.10.287.810:FF:000008">
    <property type="entry name" value="Mitochondrial import inner membrane translocase subunit TIM9"/>
    <property type="match status" value="1"/>
</dbReference>
<dbReference type="Gene3D" id="1.10.287.810">
    <property type="entry name" value="Mitochondrial import inner membrane translocase subunit tim13 like domains"/>
    <property type="match status" value="1"/>
</dbReference>
<dbReference type="InterPro" id="IPR050673">
    <property type="entry name" value="Mito_inner_translocase_sub"/>
</dbReference>
<dbReference type="InterPro" id="IPR004217">
    <property type="entry name" value="Tim10-like"/>
</dbReference>
<dbReference type="InterPro" id="IPR035427">
    <property type="entry name" value="Tim10-like_dom_sf"/>
</dbReference>
<dbReference type="PANTHER" id="PTHR13172">
    <property type="entry name" value="MITOCHONDRIAL IMPORT INNER MEMBRANE TRANSLOCASE SUBUNIT TIM9B"/>
    <property type="match status" value="1"/>
</dbReference>
<dbReference type="Pfam" id="PF02953">
    <property type="entry name" value="zf-Tim10_DDP"/>
    <property type="match status" value="1"/>
</dbReference>
<dbReference type="SUPFAM" id="SSF144122">
    <property type="entry name" value="Tim10-like"/>
    <property type="match status" value="1"/>
</dbReference>
<organism>
    <name type="scientific">Debaryomyces hansenii (strain ATCC 36239 / CBS 767 / BCRC 21394 / JCM 1990 / NBRC 0083 / IGC 2968)</name>
    <name type="common">Yeast</name>
    <name type="synonym">Torulaspora hansenii</name>
    <dbReference type="NCBI Taxonomy" id="284592"/>
    <lineage>
        <taxon>Eukaryota</taxon>
        <taxon>Fungi</taxon>
        <taxon>Dikarya</taxon>
        <taxon>Ascomycota</taxon>
        <taxon>Saccharomycotina</taxon>
        <taxon>Pichiomycetes</taxon>
        <taxon>Debaryomycetaceae</taxon>
        <taxon>Debaryomyces</taxon>
    </lineage>
</organism>
<protein>
    <recommendedName>
        <fullName>Mitochondrial import inner membrane translocase subunit TIM9</fullName>
    </recommendedName>
</protein>